<comment type="function">
    <text evidence="1">Component of the cap-binding complex (CBC), which binds cotranscriptionally to the 5'-cap of pre-mRNAs and is involved in various processes such as pre-mRNA splicing and RNA-mediated gene silencing (RNAi). The CBC complex is involved in miRNA-mediated RNA interference via its interaction with Ars2 and is required for primary microRNAs (miRNAs) processing. Also involved in innate immunity via the short interfering RNAs (siRNAs) processing machinery by restricting the viral RNA production. In the CBC complex, Cbp80 does not bind directly capped RNAs (m7GpppG-capped RNA) but is required to stabilize the movement of the N-terminal loop of Cbp20 and lock the CBC into a high affinity cap-binding state with the cap structure (By similarity).</text>
</comment>
<comment type="subunit">
    <text evidence="1">Component of the nuclear cap-binding complex (CBC), a heterodimer composed of Cbp80 and Cbp20 that interacts with m7GpppG-capped RNA.</text>
</comment>
<comment type="subcellular location">
    <subcellularLocation>
        <location evidence="1">Nucleus</location>
    </subcellularLocation>
</comment>
<comment type="similarity">
    <text evidence="3">Belongs to the NCBP1 family.</text>
</comment>
<sequence length="783" mass="91393">MSRRRAHDTEDESYDHRRNKRRRVSENQEIEDRLESLILRVGERSTSSVESNLEGLVSVLEADLGTFRLKILRILSDCAVRMPEKCTVYTTLVGLLNAKNYKFGGEFVDYMVKTFKESLKLCRWDAARYSLRFLADLVNCHVISATSLLQLLDTIIDVSNEDTVPQVRRDWFVFAVLSTLPWVGRDLYEKKESALESLLLRIEVYLNKRSKKHHNALRVWSSDAPHPQEEYLDCLWAQIRKLRQDNWAEKHIPRPYLVFDAILCEALQHNLPQITPPPHHDAIEYPMPWVVYRMFDYTDCPDGPNLPGAHSIERFLIEEHLHHIIETHHHERKDCAAQLLNFPFKHKIPLEYCIVEVIFAELFHMPTPRYLDICYGSILIELCKLQPGTLPQVLAQATEILFMRIDSMNTSCFDRFVNWFSYHLSNFKFTWSWDEWDSCLLLDAEHPRPKFIQEVLQKCLRLSYHQRITEMMPTTYAKLIPVMPVPNYKYTSEEAANLPGTTVALQLVGAIRQKCTPEEVVNILKEIPSSGYSGEEMSDGSFNALKIDFCGQSKFHVVFRALAETEEAQICILHNIFELWSSHQQMMVVLIDKLLKLQIVDCSAVATWIFSKEMTGEFTKMYLWEILHLTIKKMNKHVIKLDTELDNAKEKLSKADSSSSDTDEDTPHKRKKPITHADKPSEEVVERMEEKLEAANVNQKRLFLIVFQRFIMILSEHLLRSDTDGRDPDTDWYRWTIGRLQQVFLMHHEQVQKYSSTLETLLFTSDLDSHILEVFQQFVALRA</sequence>
<accession>B4M7T6</accession>
<proteinExistence type="inferred from homology"/>
<dbReference type="EMBL" id="CH940653">
    <property type="protein sequence ID" value="EDW62853.1"/>
    <property type="molecule type" value="Genomic_DNA"/>
</dbReference>
<dbReference type="RefSeq" id="XP_002057367.2">
    <property type="nucleotide sequence ID" value="XM_002057331.2"/>
</dbReference>
<dbReference type="SMR" id="B4M7T6"/>
<dbReference type="FunCoup" id="B4M7T6">
    <property type="interactions" value="2618"/>
</dbReference>
<dbReference type="STRING" id="7244.B4M7T6"/>
<dbReference type="GeneID" id="6633562"/>
<dbReference type="KEGG" id="dvi:6633562"/>
<dbReference type="CTD" id="44409"/>
<dbReference type="eggNOG" id="KOG1104">
    <property type="taxonomic scope" value="Eukaryota"/>
</dbReference>
<dbReference type="HOGENOM" id="CLU_013207_0_0_1"/>
<dbReference type="InParanoid" id="B4M7T6"/>
<dbReference type="OMA" id="AYMILEV"/>
<dbReference type="OrthoDB" id="10252707at2759"/>
<dbReference type="PhylomeDB" id="B4M7T6"/>
<dbReference type="ChiTaRS" id="Cbp80">
    <property type="organism name" value="fly"/>
</dbReference>
<dbReference type="Proteomes" id="UP000008792">
    <property type="component" value="Unassembled WGS sequence"/>
</dbReference>
<dbReference type="GO" id="GO:0005846">
    <property type="term" value="C:nuclear cap binding complex"/>
    <property type="evidence" value="ECO:0007669"/>
    <property type="project" value="InterPro"/>
</dbReference>
<dbReference type="GO" id="GO:0005634">
    <property type="term" value="C:nucleus"/>
    <property type="evidence" value="ECO:0007669"/>
    <property type="project" value="UniProtKB-SubCell"/>
</dbReference>
<dbReference type="GO" id="GO:0099524">
    <property type="term" value="C:postsynaptic cytosol"/>
    <property type="evidence" value="ECO:0007669"/>
    <property type="project" value="EnsemblMetazoa"/>
</dbReference>
<dbReference type="GO" id="GO:0099523">
    <property type="term" value="C:presynaptic cytosol"/>
    <property type="evidence" value="ECO:0007669"/>
    <property type="project" value="EnsemblMetazoa"/>
</dbReference>
<dbReference type="GO" id="GO:0003729">
    <property type="term" value="F:mRNA binding"/>
    <property type="evidence" value="ECO:0007669"/>
    <property type="project" value="TreeGrafter"/>
</dbReference>
<dbReference type="GO" id="GO:0000339">
    <property type="term" value="F:RNA cap binding"/>
    <property type="evidence" value="ECO:0007669"/>
    <property type="project" value="InterPro"/>
</dbReference>
<dbReference type="GO" id="GO:0006370">
    <property type="term" value="P:7-methylguanosine mRNA capping"/>
    <property type="evidence" value="ECO:0007669"/>
    <property type="project" value="UniProtKB-KW"/>
</dbReference>
<dbReference type="GO" id="GO:0006406">
    <property type="term" value="P:mRNA export from nucleus"/>
    <property type="evidence" value="ECO:0007669"/>
    <property type="project" value="InterPro"/>
</dbReference>
<dbReference type="GO" id="GO:0045071">
    <property type="term" value="P:negative regulation of viral genome replication"/>
    <property type="evidence" value="ECO:0007669"/>
    <property type="project" value="EnsemblMetazoa"/>
</dbReference>
<dbReference type="GO" id="GO:0000184">
    <property type="term" value="P:nuclear-transcribed mRNA catabolic process, nonsense-mediated decay"/>
    <property type="evidence" value="ECO:0007669"/>
    <property type="project" value="TreeGrafter"/>
</dbReference>
<dbReference type="GO" id="GO:0031053">
    <property type="term" value="P:primary miRNA processing"/>
    <property type="evidence" value="ECO:0007669"/>
    <property type="project" value="EnsemblMetazoa"/>
</dbReference>
<dbReference type="GO" id="GO:0035194">
    <property type="term" value="P:regulatory ncRNA-mediated post-transcriptional gene silencing"/>
    <property type="evidence" value="ECO:0007669"/>
    <property type="project" value="EnsemblMetazoa"/>
</dbReference>
<dbReference type="GO" id="GO:0008380">
    <property type="term" value="P:RNA splicing"/>
    <property type="evidence" value="ECO:0007669"/>
    <property type="project" value="UniProtKB-KW"/>
</dbReference>
<dbReference type="GO" id="GO:0030422">
    <property type="term" value="P:siRNA processing"/>
    <property type="evidence" value="ECO:0007669"/>
    <property type="project" value="EnsemblMetazoa"/>
</dbReference>
<dbReference type="FunFam" id="1.25.40.180:FF:000010">
    <property type="entry name" value="Nuclear cap-binding protein subunit 1"/>
    <property type="match status" value="1"/>
</dbReference>
<dbReference type="FunFam" id="1.25.40.180:FF:000041">
    <property type="entry name" value="Nuclear cap-binding protein subunit 1"/>
    <property type="match status" value="1"/>
</dbReference>
<dbReference type="Gene3D" id="1.25.40.180">
    <property type="match status" value="3"/>
</dbReference>
<dbReference type="InterPro" id="IPR016024">
    <property type="entry name" value="ARM-type_fold"/>
</dbReference>
<dbReference type="InterPro" id="IPR027159">
    <property type="entry name" value="CBP80"/>
</dbReference>
<dbReference type="InterPro" id="IPR015172">
    <property type="entry name" value="MIF4G-like_typ-1"/>
</dbReference>
<dbReference type="InterPro" id="IPR015174">
    <property type="entry name" value="MIF4G-like_typ-2"/>
</dbReference>
<dbReference type="InterPro" id="IPR003890">
    <property type="entry name" value="MIF4G-like_typ-3"/>
</dbReference>
<dbReference type="PANTHER" id="PTHR12412">
    <property type="entry name" value="CAP BINDING PROTEIN"/>
    <property type="match status" value="1"/>
</dbReference>
<dbReference type="PANTHER" id="PTHR12412:SF2">
    <property type="entry name" value="NUCLEAR CAP-BINDING PROTEIN SUBUNIT 1"/>
    <property type="match status" value="1"/>
</dbReference>
<dbReference type="Pfam" id="PF02854">
    <property type="entry name" value="MIF4G"/>
    <property type="match status" value="1"/>
</dbReference>
<dbReference type="Pfam" id="PF09088">
    <property type="entry name" value="MIF4G_like"/>
    <property type="match status" value="1"/>
</dbReference>
<dbReference type="Pfam" id="PF09090">
    <property type="entry name" value="MIF4G_like_2"/>
    <property type="match status" value="1"/>
</dbReference>
<dbReference type="SMART" id="SM00543">
    <property type="entry name" value="MIF4G"/>
    <property type="match status" value="1"/>
</dbReference>
<dbReference type="SUPFAM" id="SSF48371">
    <property type="entry name" value="ARM repeat"/>
    <property type="match status" value="3"/>
</dbReference>
<reference key="1">
    <citation type="journal article" date="2007" name="Nature">
        <title>Evolution of genes and genomes on the Drosophila phylogeny.</title>
        <authorList>
            <consortium name="Drosophila 12 genomes consortium"/>
        </authorList>
    </citation>
    <scope>NUCLEOTIDE SEQUENCE [LARGE SCALE GENOMIC DNA]</scope>
    <source>
        <strain>Tucson 15010-1051.87</strain>
    </source>
</reference>
<evidence type="ECO:0000250" key="1"/>
<evidence type="ECO:0000256" key="2">
    <source>
        <dbReference type="SAM" id="MobiDB-lite"/>
    </source>
</evidence>
<evidence type="ECO:0000305" key="3"/>
<keyword id="KW-0506">mRNA capping</keyword>
<keyword id="KW-0507">mRNA processing</keyword>
<keyword id="KW-0508">mRNA splicing</keyword>
<keyword id="KW-0539">Nucleus</keyword>
<keyword id="KW-0597">Phosphoprotein</keyword>
<keyword id="KW-1185">Reference proteome</keyword>
<keyword id="KW-0943">RNA-mediated gene silencing</keyword>
<gene>
    <name type="primary">Cbp80</name>
    <name type="ORF">GJ17049</name>
</gene>
<protein>
    <recommendedName>
        <fullName>Nuclear cap-binding protein subunit 1</fullName>
    </recommendedName>
    <alternativeName>
        <fullName>80 kDa nuclear cap-binding protein</fullName>
        <shortName>CBP80</shortName>
        <shortName>NCBP 80 kDa subunit</shortName>
    </alternativeName>
</protein>
<name>NCBP1_DROVI</name>
<organism>
    <name type="scientific">Drosophila virilis</name>
    <name type="common">Fruit fly</name>
    <dbReference type="NCBI Taxonomy" id="7244"/>
    <lineage>
        <taxon>Eukaryota</taxon>
        <taxon>Metazoa</taxon>
        <taxon>Ecdysozoa</taxon>
        <taxon>Arthropoda</taxon>
        <taxon>Hexapoda</taxon>
        <taxon>Insecta</taxon>
        <taxon>Pterygota</taxon>
        <taxon>Neoptera</taxon>
        <taxon>Endopterygota</taxon>
        <taxon>Diptera</taxon>
        <taxon>Brachycera</taxon>
        <taxon>Muscomorpha</taxon>
        <taxon>Ephydroidea</taxon>
        <taxon>Drosophilidae</taxon>
        <taxon>Drosophila</taxon>
    </lineage>
</organism>
<feature type="chain" id="PRO_0000385240" description="Nuclear cap-binding protein subunit 1">
    <location>
        <begin position="1"/>
        <end position="783"/>
    </location>
</feature>
<feature type="domain" description="MIF4G">
    <location>
        <begin position="31"/>
        <end position="243"/>
    </location>
</feature>
<feature type="region of interest" description="Disordered" evidence="2">
    <location>
        <begin position="1"/>
        <end position="25"/>
    </location>
</feature>
<feature type="region of interest" description="Disordered" evidence="2">
    <location>
        <begin position="652"/>
        <end position="683"/>
    </location>
</feature>
<feature type="modified residue" description="Phosphothreonine" evidence="1">
    <location>
        <position position="9"/>
    </location>
</feature>